<keyword id="KW-0217">Developmental protein</keyword>
<keyword id="KW-0238">DNA-binding</keyword>
<keyword id="KW-0371">Homeobox</keyword>
<keyword id="KW-0539">Nucleus</keyword>
<dbReference type="EMBL" id="X63531">
    <property type="protein sequence ID" value="CAA45094.1"/>
    <property type="molecule type" value="mRNA"/>
</dbReference>
<dbReference type="PIR" id="B48820">
    <property type="entry name" value="B48820"/>
</dbReference>
<dbReference type="SMR" id="P53770"/>
<dbReference type="GO" id="GO:0005634">
    <property type="term" value="C:nucleus"/>
    <property type="evidence" value="ECO:0007669"/>
    <property type="project" value="UniProtKB-SubCell"/>
</dbReference>
<dbReference type="GO" id="GO:0000981">
    <property type="term" value="F:DNA-binding transcription factor activity, RNA polymerase II-specific"/>
    <property type="evidence" value="ECO:0007669"/>
    <property type="project" value="InterPro"/>
</dbReference>
<dbReference type="GO" id="GO:0000978">
    <property type="term" value="F:RNA polymerase II cis-regulatory region sequence-specific DNA binding"/>
    <property type="evidence" value="ECO:0007669"/>
    <property type="project" value="TreeGrafter"/>
</dbReference>
<dbReference type="GO" id="GO:0030855">
    <property type="term" value="P:epithelial cell differentiation"/>
    <property type="evidence" value="ECO:0007669"/>
    <property type="project" value="TreeGrafter"/>
</dbReference>
<dbReference type="CDD" id="cd00086">
    <property type="entry name" value="homeodomain"/>
    <property type="match status" value="1"/>
</dbReference>
<dbReference type="FunFam" id="1.10.10.60:FF:000048">
    <property type="entry name" value="Distal-less homeobox 2"/>
    <property type="match status" value="1"/>
</dbReference>
<dbReference type="Gene3D" id="1.10.10.60">
    <property type="entry name" value="Homeodomain-like"/>
    <property type="match status" value="1"/>
</dbReference>
<dbReference type="InterPro" id="IPR050460">
    <property type="entry name" value="Distal-less_Homeobox_TF"/>
</dbReference>
<dbReference type="InterPro" id="IPR022135">
    <property type="entry name" value="Distal-less_N"/>
</dbReference>
<dbReference type="InterPro" id="IPR001356">
    <property type="entry name" value="HD"/>
</dbReference>
<dbReference type="InterPro" id="IPR020479">
    <property type="entry name" value="HD_metazoa"/>
</dbReference>
<dbReference type="InterPro" id="IPR017970">
    <property type="entry name" value="Homeobox_CS"/>
</dbReference>
<dbReference type="InterPro" id="IPR009057">
    <property type="entry name" value="Homeodomain-like_sf"/>
</dbReference>
<dbReference type="InterPro" id="IPR000047">
    <property type="entry name" value="HTH_motif"/>
</dbReference>
<dbReference type="PANTHER" id="PTHR24327">
    <property type="entry name" value="HOMEOBOX PROTEIN"/>
    <property type="match status" value="1"/>
</dbReference>
<dbReference type="PANTHER" id="PTHR24327:SF28">
    <property type="entry name" value="HOMEOBOX PROTEIN DLX-3"/>
    <property type="match status" value="1"/>
</dbReference>
<dbReference type="Pfam" id="PF12413">
    <property type="entry name" value="DLL_N"/>
    <property type="match status" value="1"/>
</dbReference>
<dbReference type="Pfam" id="PF00046">
    <property type="entry name" value="Homeodomain"/>
    <property type="match status" value="1"/>
</dbReference>
<dbReference type="PRINTS" id="PR00024">
    <property type="entry name" value="HOMEOBOX"/>
</dbReference>
<dbReference type="PRINTS" id="PR00031">
    <property type="entry name" value="HTHREPRESSR"/>
</dbReference>
<dbReference type="SMART" id="SM00389">
    <property type="entry name" value="HOX"/>
    <property type="match status" value="1"/>
</dbReference>
<dbReference type="SUPFAM" id="SSF46689">
    <property type="entry name" value="Homeodomain-like"/>
    <property type="match status" value="1"/>
</dbReference>
<dbReference type="PROSITE" id="PS00027">
    <property type="entry name" value="HOMEOBOX_1"/>
    <property type="match status" value="1"/>
</dbReference>
<dbReference type="PROSITE" id="PS50071">
    <property type="entry name" value="HOMEOBOX_2"/>
    <property type="match status" value="1"/>
</dbReference>
<gene>
    <name type="primary">DLX3</name>
    <name type="synonym">BOX4</name>
</gene>
<proteinExistence type="evidence at transcript level"/>
<feature type="chain" id="PRO_0000049043" description="Homeobox protein DLX-3">
    <location>
        <begin position="1"/>
        <end position="273"/>
    </location>
</feature>
<feature type="DNA-binding region" description="Homeobox" evidence="1">
    <location>
        <begin position="125"/>
        <end position="184"/>
    </location>
</feature>
<feature type="region of interest" description="Disordered" evidence="2">
    <location>
        <begin position="15"/>
        <end position="37"/>
    </location>
</feature>
<feature type="region of interest" description="Disordered" evidence="2">
    <location>
        <begin position="188"/>
        <end position="235"/>
    </location>
</feature>
<feature type="region of interest" description="Disordered" evidence="2">
    <location>
        <begin position="248"/>
        <end position="273"/>
    </location>
</feature>
<feature type="compositionally biased region" description="Polar residues" evidence="2">
    <location>
        <begin position="20"/>
        <end position="30"/>
    </location>
</feature>
<feature type="compositionally biased region" description="Polar residues" evidence="2">
    <location>
        <begin position="198"/>
        <end position="235"/>
    </location>
</feature>
<feature type="compositionally biased region" description="Low complexity" evidence="2">
    <location>
        <begin position="258"/>
        <end position="273"/>
    </location>
</feature>
<accession>P53770</accession>
<protein>
    <recommendedName>
        <fullName>Homeobox protein DLX-3</fullName>
    </recommendedName>
    <alternativeName>
        <fullName>Box-4</fullName>
    </alternativeName>
    <alternativeName>
        <fullName>NvHbox-4</fullName>
    </alternativeName>
</protein>
<evidence type="ECO:0000255" key="1">
    <source>
        <dbReference type="PROSITE-ProRule" id="PRU00108"/>
    </source>
</evidence>
<evidence type="ECO:0000256" key="2">
    <source>
        <dbReference type="SAM" id="MobiDB-lite"/>
    </source>
</evidence>
<evidence type="ECO:0000305" key="3"/>
<sequence>MTTILTDLSSSLSCHAASKDSPTLPESSATDLGYYSTHGGTHSPHDYYQNQPYSQPISHYPYHQFNLNGLGGPGTYSPKSEYPYGGGYRQYGHYREPAMAVQEPVTVKEEPEPEVRMVNGKPKKIRKPRTIYSSYQLAALQRRFQKAQYLALPERAELAAQLGLTQTQVKIWFQNRRSKFKKLYKNGEVPGMEHSPDNSDSMACNSPASPTVWDNNTPSRVQHTQAQPLPHNSSPSYLEDYNPWYHHPQNLSGPHLQPPGTMHHTPPGTGAVY</sequence>
<comment type="subcellular location">
    <subcellularLocation>
        <location evidence="1">Nucleus</location>
    </subcellularLocation>
</comment>
<comment type="tissue specificity">
    <text>Expressed in regeneration blastemas. Detected in forelimbs, hindlimbs, the tail, flank, and brain as well as in limb and tail blastemas.</text>
</comment>
<comment type="similarity">
    <text evidence="3">Belongs to the distal-less homeobox family.</text>
</comment>
<organism>
    <name type="scientific">Notophthalmus viridescens</name>
    <name type="common">Eastern newt</name>
    <name type="synonym">Triturus viridescens</name>
    <dbReference type="NCBI Taxonomy" id="8316"/>
    <lineage>
        <taxon>Eukaryota</taxon>
        <taxon>Metazoa</taxon>
        <taxon>Chordata</taxon>
        <taxon>Craniata</taxon>
        <taxon>Vertebrata</taxon>
        <taxon>Euteleostomi</taxon>
        <taxon>Amphibia</taxon>
        <taxon>Batrachia</taxon>
        <taxon>Caudata</taxon>
        <taxon>Salamandroidea</taxon>
        <taxon>Salamandridae</taxon>
        <taxon>Pleurodelinae</taxon>
        <taxon>Notophthalmus</taxon>
    </lineage>
</organism>
<reference key="1">
    <citation type="journal article" date="1992" name="Dev. Biol.">
        <title>Two distal-less related homeobox-containing genes expressed in regeneration blastemas of the newt.</title>
        <authorList>
            <person name="Beauchemin M."/>
            <person name="Savard P."/>
        </authorList>
    </citation>
    <scope>NUCLEOTIDE SEQUENCE [MRNA]</scope>
    <source>
        <tissue>Skin</tissue>
    </source>
</reference>
<name>DLX3_NOTVI</name>